<comment type="function">
    <text evidence="2 3 4">Receptor required for the peroxisomal import of proteins containing a C-terminal PTS2-type peroxisomal targeting signal, such as 3-oxoacyl-CoA thiolase (PubMed:25009284, PubMed:9472033). Specifically binds to cargo proteins containing a PTS2 peroxisomal targeting signal in the cytosol (PubMed:25009284). Cargo protein-binding triggers interaction with PEX20 and formation of a ternary complex composed of PEX20 and PEX7 along with PTS2-containing cargo proteins, which is tranlocated into peroxisomes by passing through the peroxisomal docking complex (PubMed:16390998, PubMed:25009284). PEX7 receptor is then retrotranslocated into the cytosol, where it is ubiquitinated and degraded (PubMed:25009284).</text>
</comment>
<comment type="subunit">
    <text evidence="2">Interacts with PEX20.</text>
</comment>
<comment type="subcellular location">
    <subcellularLocation>
        <location evidence="3 4">Cytoplasm</location>
        <location evidence="3 4">Cytosol</location>
    </subcellularLocation>
    <subcellularLocation>
        <location evidence="3 4">Peroxisome matrix</location>
    </subcellularLocation>
</comment>
<comment type="PTM">
    <text evidence="3">Polyubiquitinated, leading to its degradation by the proteasome (PubMed:25009284). Ubiquitination is dependent of PEX5 and PEX20 and takes place following recycling into the cytosol (PubMed:25009284).</text>
</comment>
<comment type="disruption phenotype">
    <text evidence="4">Specifically disturbs in the peroxisomal import of proteins containing a peroxisomal targeting signal type II (PTS2), and fails to grow on oleate.</text>
</comment>
<comment type="similarity">
    <text evidence="7">Belongs to the WD repeat peroxin-7 family.</text>
</comment>
<sequence length="376" mass="42422">MFKFQTNGFSGYAVRYSPFYDNKIAVATSANYGLVGNGRLYVLSIMDDGNIITDISYDTQDGLFGVAWSETNENHVLTSSGDGCVSLFDTTLKDYPVMKFTEHQREVFSVDWSNIDKNLFCSASWDGSVKVWSPGSNRNTSLLTLRSLASREEKTGRIEKPIPVVQPSQVPMSKTRPNIRNDNNDCVYDAKFSFHDPNIIMSCNSDSHLQLWDTRLPNPLFMDFVAHNGLEALSCDFNRYRPFVVASAGVDKLAKVWDTRMIQPNVHSRPPRALNKFMGHEFAIRKLAWSPHGPTQLLTCSYDMTVRVWNDSPSPTSRVGLLDGASQPHAPPCSKIFSAHTEFVMGCDWSLWGEPGWVVTTGWDEMVYVWNTQRLQ</sequence>
<reference key="1">
    <citation type="journal article" date="2009" name="Nat. Biotechnol.">
        <title>Genome sequence of the recombinant protein production host Pichia pastoris.</title>
        <authorList>
            <person name="De Schutter K."/>
            <person name="Lin Y.-C."/>
            <person name="Tiels P."/>
            <person name="Van Hecke A."/>
            <person name="Glinka S."/>
            <person name="Weber-Lehmann J."/>
            <person name="Rouze P."/>
            <person name="Van de Peer Y."/>
            <person name="Callewaert N."/>
        </authorList>
    </citation>
    <scope>NUCLEOTIDE SEQUENCE [LARGE SCALE GENOMIC DNA]</scope>
    <source>
        <strain>GS115 / ATCC 20864</strain>
    </source>
</reference>
<reference key="2">
    <citation type="journal article" date="1998" name="J. Cell Biol.">
        <title>A mobile PTS2 receptor for peroxisomal protein import in Pichia pastoris.</title>
        <authorList>
            <person name="Elgersma Y."/>
            <person name="Elgersma-Hooisma M."/>
            <person name="Wenzel T."/>
            <person name="McCaffery J.M."/>
            <person name="Farquhar M.G."/>
            <person name="Subramani S."/>
        </authorList>
    </citation>
    <scope>FUNCTION</scope>
    <scope>DISRUPTION PHENOTYPE</scope>
    <scope>SUBCELLULAR LOCATION</scope>
</reference>
<reference key="3">
    <citation type="journal article" date="2006" name="J. Cell Biol.">
        <title>Dynamics of the peroxisomal import cycle of PpPex20p: ubiquitin-dependent localization and regulation.</title>
        <authorList>
            <person name="Leon S."/>
            <person name="Zhang L."/>
            <person name="McDonald W.H."/>
            <person name="Yates J. III"/>
            <person name="Cregg J.M."/>
            <person name="Subramani S."/>
        </authorList>
    </citation>
    <scope>INTERACTION WITH PEX20</scope>
</reference>
<reference key="4">
    <citation type="journal article" date="2014" name="Mol. Biol. Cell">
        <title>The unique degradation pathway of the PTS2 receptor, Pex7, is dependent on the PTS receptor/coreceptor, Pex5 and Pex20.</title>
        <authorList>
            <person name="Hagstrom D."/>
            <person name="Ma C."/>
            <person name="Guha-Polley S."/>
            <person name="Subramani S."/>
        </authorList>
    </citation>
    <scope>FUNCTION</scope>
    <scope>SUBCELLULAR LOCATION</scope>
    <scope>INTERACTION WITH PEX20</scope>
    <scope>UBIQUITINATION</scope>
</reference>
<dbReference type="EMBL" id="FN392319">
    <property type="protein sequence ID" value="CAY68283.1"/>
    <property type="molecule type" value="Genomic_DNA"/>
</dbReference>
<dbReference type="RefSeq" id="XP_002490564.1">
    <property type="nucleotide sequence ID" value="XM_002490519.1"/>
</dbReference>
<dbReference type="SMR" id="C4QYG0"/>
<dbReference type="FunCoup" id="C4QYG0">
    <property type="interactions" value="474"/>
</dbReference>
<dbReference type="STRING" id="644223.C4QYG0"/>
<dbReference type="EnsemblFungi" id="CAY68283">
    <property type="protein sequence ID" value="CAY68283"/>
    <property type="gene ID" value="PAS_chr1-4_0433"/>
</dbReference>
<dbReference type="GeneID" id="8197021"/>
<dbReference type="KEGG" id="ppa:PAS_chr1-4_0433"/>
<dbReference type="eggNOG" id="KOG0277">
    <property type="taxonomic scope" value="Eukaryota"/>
</dbReference>
<dbReference type="HOGENOM" id="CLU_046581_1_0_1"/>
<dbReference type="InParanoid" id="C4QYG0"/>
<dbReference type="OMA" id="FAVHWNL"/>
<dbReference type="OrthoDB" id="273771at2759"/>
<dbReference type="Proteomes" id="UP000000314">
    <property type="component" value="Chromosome 1"/>
</dbReference>
<dbReference type="GO" id="GO:0062137">
    <property type="term" value="C:cargo receptor complex"/>
    <property type="evidence" value="ECO:0007669"/>
    <property type="project" value="EnsemblFungi"/>
</dbReference>
<dbReference type="GO" id="GO:0005829">
    <property type="term" value="C:cytosol"/>
    <property type="evidence" value="ECO:0007669"/>
    <property type="project" value="UniProtKB-SubCell"/>
</dbReference>
<dbReference type="GO" id="GO:0005782">
    <property type="term" value="C:peroxisomal matrix"/>
    <property type="evidence" value="ECO:0007669"/>
    <property type="project" value="UniProtKB-SubCell"/>
</dbReference>
<dbReference type="GO" id="GO:0005778">
    <property type="term" value="C:peroxisomal membrane"/>
    <property type="evidence" value="ECO:0007669"/>
    <property type="project" value="EnsemblFungi"/>
</dbReference>
<dbReference type="GO" id="GO:0005053">
    <property type="term" value="F:peroxisome matrix targeting signal-2 binding"/>
    <property type="evidence" value="ECO:0007669"/>
    <property type="project" value="EnsemblFungi"/>
</dbReference>
<dbReference type="GO" id="GO:0016560">
    <property type="term" value="P:protein import into peroxisome matrix, docking"/>
    <property type="evidence" value="ECO:0007669"/>
    <property type="project" value="EnsemblFungi"/>
</dbReference>
<dbReference type="Gene3D" id="2.130.10.10">
    <property type="entry name" value="YVTN repeat-like/Quinoprotein amine dehydrogenase"/>
    <property type="match status" value="1"/>
</dbReference>
<dbReference type="InterPro" id="IPR044536">
    <property type="entry name" value="PEX7"/>
</dbReference>
<dbReference type="InterPro" id="IPR015943">
    <property type="entry name" value="WD40/YVTN_repeat-like_dom_sf"/>
</dbReference>
<dbReference type="InterPro" id="IPR019775">
    <property type="entry name" value="WD40_repeat_CS"/>
</dbReference>
<dbReference type="InterPro" id="IPR036322">
    <property type="entry name" value="WD40_repeat_dom_sf"/>
</dbReference>
<dbReference type="InterPro" id="IPR001680">
    <property type="entry name" value="WD40_rpt"/>
</dbReference>
<dbReference type="PANTHER" id="PTHR46027">
    <property type="entry name" value="PEROXISOMAL TARGETING SIGNAL 2 RECEPTOR"/>
    <property type="match status" value="1"/>
</dbReference>
<dbReference type="PANTHER" id="PTHR46027:SF1">
    <property type="entry name" value="PEROXISOMAL TARGETING SIGNAL 2 RECEPTOR"/>
    <property type="match status" value="1"/>
</dbReference>
<dbReference type="Pfam" id="PF00400">
    <property type="entry name" value="WD40"/>
    <property type="match status" value="4"/>
</dbReference>
<dbReference type="SMART" id="SM00320">
    <property type="entry name" value="WD40"/>
    <property type="match status" value="6"/>
</dbReference>
<dbReference type="SUPFAM" id="SSF50978">
    <property type="entry name" value="WD40 repeat-like"/>
    <property type="match status" value="1"/>
</dbReference>
<dbReference type="PROSITE" id="PS00678">
    <property type="entry name" value="WD_REPEATS_1"/>
    <property type="match status" value="1"/>
</dbReference>
<dbReference type="PROSITE" id="PS50082">
    <property type="entry name" value="WD_REPEATS_2"/>
    <property type="match status" value="2"/>
</dbReference>
<dbReference type="PROSITE" id="PS50294">
    <property type="entry name" value="WD_REPEATS_REGION"/>
    <property type="match status" value="2"/>
</dbReference>
<accession>C4QYG0</accession>
<keyword id="KW-0963">Cytoplasm</keyword>
<keyword id="KW-0576">Peroxisome</keyword>
<keyword id="KW-0653">Protein transport</keyword>
<keyword id="KW-0675">Receptor</keyword>
<keyword id="KW-1185">Reference proteome</keyword>
<keyword id="KW-0677">Repeat</keyword>
<keyword id="KW-0813">Transport</keyword>
<keyword id="KW-0832">Ubl conjugation</keyword>
<keyword id="KW-0853">WD repeat</keyword>
<evidence type="ECO:0000255" key="1"/>
<evidence type="ECO:0000269" key="2">
    <source>
    </source>
</evidence>
<evidence type="ECO:0000269" key="3">
    <source>
    </source>
</evidence>
<evidence type="ECO:0000269" key="4">
    <source>
    </source>
</evidence>
<evidence type="ECO:0000303" key="5">
    <source>
    </source>
</evidence>
<evidence type="ECO:0000303" key="6">
    <source>
    </source>
</evidence>
<evidence type="ECO:0000305" key="7"/>
<organism>
    <name type="scientific">Komagataella phaffii (strain GS115 / ATCC 20864)</name>
    <name type="common">Yeast</name>
    <name type="synonym">Pichia pastoris</name>
    <dbReference type="NCBI Taxonomy" id="644223"/>
    <lineage>
        <taxon>Eukaryota</taxon>
        <taxon>Fungi</taxon>
        <taxon>Dikarya</taxon>
        <taxon>Ascomycota</taxon>
        <taxon>Saccharomycotina</taxon>
        <taxon>Pichiomycetes</taxon>
        <taxon>Pichiales</taxon>
        <taxon>Pichiaceae</taxon>
        <taxon>Komagataella</taxon>
    </lineage>
</organism>
<protein>
    <recommendedName>
        <fullName evidence="6">Peroxisomal targeting signal 2 receptor</fullName>
        <shortName evidence="6">PTS2 receptor</shortName>
    </recommendedName>
    <alternativeName>
        <fullName evidence="5">Peroxin-7</fullName>
    </alternativeName>
</protein>
<gene>
    <name evidence="5" type="primary">PEX7</name>
    <name type="ordered locus">PAS_chr1-4_0433</name>
</gene>
<name>PEX7_KOMPG</name>
<proteinExistence type="evidence at protein level"/>
<feature type="chain" id="PRO_0000461165" description="Peroxisomal targeting signal 2 receptor">
    <location>
        <begin position="1"/>
        <end position="376"/>
    </location>
</feature>
<feature type="repeat" description="WD 1" evidence="1">
    <location>
        <begin position="58"/>
        <end position="98"/>
    </location>
</feature>
<feature type="repeat" description="WD 2" evidence="1">
    <location>
        <begin position="102"/>
        <end position="142"/>
    </location>
</feature>
<feature type="repeat" description="WD 3" evidence="1">
    <location>
        <begin position="182"/>
        <end position="222"/>
    </location>
</feature>
<feature type="repeat" description="WD 4" evidence="1">
    <location>
        <begin position="226"/>
        <end position="267"/>
    </location>
</feature>
<feature type="repeat" description="WD 5" evidence="1">
    <location>
        <begin position="279"/>
        <end position="319"/>
    </location>
</feature>
<feature type="repeat" description="WD 6" evidence="1">
    <location>
        <begin position="339"/>
        <end position="376"/>
    </location>
</feature>